<protein>
    <recommendedName>
        <fullName evidence="12">O-methyltransferase gedA</fullName>
        <ecNumber evidence="5">2.1.1.283</ecNumber>
    </recommendedName>
    <alternativeName>
        <fullName evidence="12">Geodin synthesis protein A</fullName>
    </alternativeName>
</protein>
<reference key="1">
    <citation type="submission" date="2005-09" db="EMBL/GenBank/DDBJ databases">
        <title>Annotation of the Aspergillus terreus NIH2624 genome.</title>
        <authorList>
            <person name="Birren B.W."/>
            <person name="Lander E.S."/>
            <person name="Galagan J.E."/>
            <person name="Nusbaum C."/>
            <person name="Devon K."/>
            <person name="Henn M."/>
            <person name="Ma L.-J."/>
            <person name="Jaffe D.B."/>
            <person name="Butler J."/>
            <person name="Alvarez P."/>
            <person name="Gnerre S."/>
            <person name="Grabherr M."/>
            <person name="Kleber M."/>
            <person name="Mauceli E.W."/>
            <person name="Brockman W."/>
            <person name="Rounsley S."/>
            <person name="Young S.K."/>
            <person name="LaButti K."/>
            <person name="Pushparaj V."/>
            <person name="DeCaprio D."/>
            <person name="Crawford M."/>
            <person name="Koehrsen M."/>
            <person name="Engels R."/>
            <person name="Montgomery P."/>
            <person name="Pearson M."/>
            <person name="Howarth C."/>
            <person name="Larson L."/>
            <person name="Luoma S."/>
            <person name="White J."/>
            <person name="Alvarado L."/>
            <person name="Kodira C.D."/>
            <person name="Zeng Q."/>
            <person name="Oleary S."/>
            <person name="Yandava C."/>
            <person name="Denning D.W."/>
            <person name="Nierman W.C."/>
            <person name="Milne T."/>
            <person name="Madden K."/>
        </authorList>
    </citation>
    <scope>NUCLEOTIDE SEQUENCE [LARGE SCALE GENOMIC DNA]</scope>
    <source>
        <strain>NIH 2624 / FGSC A1156</strain>
    </source>
</reference>
<reference key="2">
    <citation type="journal article" date="1988" name="J. Biochem.">
        <title>A novel anthraquinone ring cleavage enzyme from Aspergillus terreus.</title>
        <authorList>
            <person name="Fujii I."/>
            <person name="Ebizuka Y."/>
            <person name="Sankawa U."/>
        </authorList>
    </citation>
    <scope>FUNCTION</scope>
</reference>
<reference key="3">
    <citation type="journal article" date="1991" name="Biochem. Int.">
        <title>Identification of emodinanthrone oxygenase in fungus Aspergillus terreus.</title>
        <authorList>
            <person name="Fujii I."/>
            <person name="Chen Z.G."/>
            <person name="Ebizuka Y."/>
            <person name="Sankawa U."/>
        </authorList>
    </citation>
    <scope>FUNCTION</scope>
</reference>
<reference key="4">
    <citation type="journal article" date="1992" name="Arch. Microbiol.">
        <title>Emodin O-methyltransferase from Aspergillus terreus.</title>
        <authorList>
            <person name="Chen Z.G."/>
            <person name="Fujii I."/>
            <person name="Ebizuka Y."/>
            <person name="Sankawa U."/>
        </authorList>
    </citation>
    <scope>FUNCTION</scope>
    <scope>CATALYTIC ACTIVITY</scope>
    <scope>BIOPHYSICOCHEMICAL PROPERTIES</scope>
</reference>
<reference key="5">
    <citation type="journal article" date="1995" name="J. Biol. Chem.">
        <title>Molecular cloning and heterologous expression of the gene encoding dihydrogeodin oxidase, a multicopper blue enzyme from Aspergillus terreus.</title>
        <authorList>
            <person name="Huang K.X."/>
            <person name="Fujii I."/>
            <person name="Ebizuka Y."/>
            <person name="Gomi K."/>
            <person name="Sankawa U."/>
        </authorList>
    </citation>
    <scope>FUNCTION</scope>
</reference>
<reference key="6">
    <citation type="journal article" date="2000" name="J. Antibiot.">
        <title>Enhancement of fibrinolytic activity of vascular endothelial cells by chaetoglobosin A, crinipellin B, geodin and triticone B.</title>
        <authorList>
            <person name="Shinohara C."/>
            <person name="Chikanishi T."/>
            <person name="Nakashima S."/>
            <person name="Hashimoto A."/>
            <person name="Hamanaka A."/>
            <person name="Endo A."/>
            <person name="Hasumi K."/>
        </authorList>
    </citation>
    <scope>BIOTECHNOLOGY</scope>
</reference>
<reference key="7">
    <citation type="journal article" date="2003" name="Nat. Biotechnol.">
        <title>Integrating transcriptional and metabolite profiles to direct the engineering of lovastatin-producing fungal strains.</title>
        <authorList>
            <person name="Askenazi M."/>
            <person name="Driggers E.M."/>
            <person name="Holtzman D.A."/>
            <person name="Norman T.C."/>
            <person name="Iverson S."/>
            <person name="Zimmer D.P."/>
            <person name="Boers M.E."/>
            <person name="Blomquist P.R."/>
            <person name="Martinez E.J."/>
            <person name="Monreal A.W."/>
            <person name="Feibelman T.P."/>
            <person name="Mayorga M.E."/>
            <person name="Maxon M.E."/>
            <person name="Sykes K."/>
            <person name="Tobin J.V."/>
            <person name="Cordero E."/>
            <person name="Salama S.R."/>
            <person name="Trueheart J."/>
            <person name="Royer J.C."/>
            <person name="Madden K.T."/>
        </authorList>
    </citation>
    <scope>FUNCTION</scope>
</reference>
<reference key="8">
    <citation type="journal article" date="2005" name="J. Antibiot.">
        <title>Identification and preliminary SAR studies of (+)-Geodin as a glucose uptake stimulator for rat adipocytes.</title>
        <authorList>
            <person name="Sato S."/>
            <person name="Okusa N."/>
            <person name="Ogawa A."/>
            <person name="Ikenoue T."/>
            <person name="Seki T."/>
            <person name="Tsuji T."/>
        </authorList>
    </citation>
    <scope>BIOTECHNOLOGY</scope>
</reference>
<reference key="9">
    <citation type="journal article" date="2009" name="Chem. Biol.">
        <title>Physically discrete beta-lactamase-type thioesterase catalyzes product release in atrochrysone synthesis by iterative type I polyketide synthase.</title>
        <authorList>
            <person name="Awakawa T."/>
            <person name="Yokota K."/>
            <person name="Funa N."/>
            <person name="Doi F."/>
            <person name="Mori N."/>
            <person name="Watanabe H."/>
            <person name="Horinouchi S."/>
        </authorList>
    </citation>
    <scope>FUNCTION</scope>
</reference>
<reference key="10">
    <citation type="journal article" date="2013" name="PLoS ONE">
        <title>Heterologous reconstitution of the intact geodin gene cluster in Aspergillus nidulans through a simple and versatile PCR based approach.</title>
        <authorList>
            <person name="Nielsen M.T."/>
            <person name="Nielsen J.B."/>
            <person name="Anyaogu D.C."/>
            <person name="Holm D.K."/>
            <person name="Nielsen K.F."/>
            <person name="Larsen T.O."/>
            <person name="Mortensen U.H."/>
        </authorList>
    </citation>
    <scope>FUNCTION</scope>
</reference>
<gene>
    <name evidence="12" type="primary">gedA</name>
    <name type="ORF">ATEG_08449</name>
</gene>
<dbReference type="EC" id="2.1.1.283" evidence="5"/>
<dbReference type="EMBL" id="CH476605">
    <property type="protein sequence ID" value="EAU31622.1"/>
    <property type="molecule type" value="Genomic_DNA"/>
</dbReference>
<dbReference type="RefSeq" id="XP_001217070.1">
    <property type="nucleotide sequence ID" value="XM_001217070.1"/>
</dbReference>
<dbReference type="PDB" id="7WH9">
    <property type="method" value="X-ray"/>
    <property type="resolution" value="2.80 A"/>
    <property type="chains" value="A/B/C=1-486"/>
</dbReference>
<dbReference type="PDBsum" id="7WH9"/>
<dbReference type="SMR" id="Q0CCY5"/>
<dbReference type="STRING" id="341663.Q0CCY5"/>
<dbReference type="EnsemblFungi" id="EAU31622">
    <property type="protein sequence ID" value="EAU31622"/>
    <property type="gene ID" value="ATEG_08449"/>
</dbReference>
<dbReference type="GeneID" id="4353099"/>
<dbReference type="VEuPathDB" id="FungiDB:ATEG_08449"/>
<dbReference type="eggNOG" id="KOG3178">
    <property type="taxonomic scope" value="Eukaryota"/>
</dbReference>
<dbReference type="HOGENOM" id="CLU_005533_0_1_1"/>
<dbReference type="OMA" id="ENDHFAN"/>
<dbReference type="OrthoDB" id="1606438at2759"/>
<dbReference type="BioCyc" id="MetaCyc:MONOMER-17513"/>
<dbReference type="SABIO-RK" id="Q0CCY5"/>
<dbReference type="Proteomes" id="UP000007963">
    <property type="component" value="Unassembled WGS sequence"/>
</dbReference>
<dbReference type="GO" id="GO:0008171">
    <property type="term" value="F:O-methyltransferase activity"/>
    <property type="evidence" value="ECO:0007669"/>
    <property type="project" value="InterPro"/>
</dbReference>
<dbReference type="GO" id="GO:0046983">
    <property type="term" value="F:protein dimerization activity"/>
    <property type="evidence" value="ECO:0007669"/>
    <property type="project" value="InterPro"/>
</dbReference>
<dbReference type="GO" id="GO:0032259">
    <property type="term" value="P:methylation"/>
    <property type="evidence" value="ECO:0007669"/>
    <property type="project" value="UniProtKB-KW"/>
</dbReference>
<dbReference type="GO" id="GO:0044550">
    <property type="term" value="P:secondary metabolite biosynthetic process"/>
    <property type="evidence" value="ECO:0007669"/>
    <property type="project" value="UniProtKB-ARBA"/>
</dbReference>
<dbReference type="Gene3D" id="3.40.50.150">
    <property type="entry name" value="Vaccinia Virus protein VP39"/>
    <property type="match status" value="1"/>
</dbReference>
<dbReference type="Gene3D" id="1.10.10.10">
    <property type="entry name" value="Winged helix-like DNA-binding domain superfamily/Winged helix DNA-binding domain"/>
    <property type="match status" value="1"/>
</dbReference>
<dbReference type="InterPro" id="IPR016461">
    <property type="entry name" value="COMT-like"/>
</dbReference>
<dbReference type="InterPro" id="IPR001077">
    <property type="entry name" value="O_MeTrfase_dom"/>
</dbReference>
<dbReference type="InterPro" id="IPR012967">
    <property type="entry name" value="Plant_O-MeTrfase_dimerisation"/>
</dbReference>
<dbReference type="InterPro" id="IPR029063">
    <property type="entry name" value="SAM-dependent_MTases_sf"/>
</dbReference>
<dbReference type="InterPro" id="IPR036388">
    <property type="entry name" value="WH-like_DNA-bd_sf"/>
</dbReference>
<dbReference type="InterPro" id="IPR036390">
    <property type="entry name" value="WH_DNA-bd_sf"/>
</dbReference>
<dbReference type="PANTHER" id="PTHR43712:SF2">
    <property type="entry name" value="O-METHYLTRANSFERASE CICE"/>
    <property type="match status" value="1"/>
</dbReference>
<dbReference type="PANTHER" id="PTHR43712">
    <property type="entry name" value="PUTATIVE (AFU_ORTHOLOGUE AFUA_4G14580)-RELATED"/>
    <property type="match status" value="1"/>
</dbReference>
<dbReference type="Pfam" id="PF08100">
    <property type="entry name" value="Dimerisation"/>
    <property type="match status" value="1"/>
</dbReference>
<dbReference type="Pfam" id="PF00891">
    <property type="entry name" value="Methyltransf_2"/>
    <property type="match status" value="1"/>
</dbReference>
<dbReference type="SUPFAM" id="SSF53335">
    <property type="entry name" value="S-adenosyl-L-methionine-dependent methyltransferases"/>
    <property type="match status" value="1"/>
</dbReference>
<dbReference type="SUPFAM" id="SSF46785">
    <property type="entry name" value="Winged helix' DNA-binding domain"/>
    <property type="match status" value="1"/>
</dbReference>
<dbReference type="PROSITE" id="PS51683">
    <property type="entry name" value="SAM_OMT_II"/>
    <property type="match status" value="1"/>
</dbReference>
<accession>Q0CCY5</accession>
<feature type="chain" id="PRO_0000437065" description="O-methyltransferase gedA">
    <location>
        <begin position="1"/>
        <end position="486"/>
    </location>
</feature>
<feature type="active site" description="Proton acceptor" evidence="2">
    <location>
        <position position="373"/>
    </location>
</feature>
<feature type="binding site" evidence="1">
    <location>
        <begin position="298"/>
        <end position="299"/>
    </location>
    <ligand>
        <name>S-adenosyl-L-methionine</name>
        <dbReference type="ChEBI" id="CHEBI:59789"/>
    </ligand>
</feature>
<feature type="binding site" evidence="2">
    <location>
        <position position="321"/>
    </location>
    <ligand>
        <name>S-adenosyl-L-methionine</name>
        <dbReference type="ChEBI" id="CHEBI:59789"/>
    </ligand>
</feature>
<feature type="binding site" evidence="1">
    <location>
        <begin position="353"/>
        <end position="354"/>
    </location>
    <ligand>
        <name>S-adenosyl-L-methionine</name>
        <dbReference type="ChEBI" id="CHEBI:59789"/>
    </ligand>
</feature>
<feature type="binding site" evidence="1">
    <location>
        <position position="369"/>
    </location>
    <ligand>
        <name>S-adenosyl-L-methionine</name>
        <dbReference type="ChEBI" id="CHEBI:59789"/>
    </ligand>
</feature>
<feature type="helix" evidence="13">
    <location>
        <begin position="8"/>
        <end position="41"/>
    </location>
</feature>
<feature type="helix" evidence="13">
    <location>
        <begin position="50"/>
        <end position="52"/>
    </location>
</feature>
<feature type="helix" evidence="13">
    <location>
        <begin position="57"/>
        <end position="77"/>
    </location>
</feature>
<feature type="helix" evidence="13">
    <location>
        <begin position="80"/>
        <end position="89"/>
    </location>
</feature>
<feature type="helix" evidence="13">
    <location>
        <begin position="91"/>
        <end position="102"/>
    </location>
</feature>
<feature type="helix" evidence="13">
    <location>
        <begin position="105"/>
        <end position="110"/>
    </location>
</feature>
<feature type="helix" evidence="13">
    <location>
        <begin position="120"/>
        <end position="127"/>
    </location>
</feature>
<feature type="helix" evidence="13">
    <location>
        <begin position="131"/>
        <end position="143"/>
    </location>
</feature>
<feature type="strand" evidence="13">
    <location>
        <begin position="146"/>
        <end position="151"/>
    </location>
</feature>
<feature type="strand" evidence="13">
    <location>
        <begin position="154"/>
        <end position="156"/>
    </location>
</feature>
<feature type="helix" evidence="13">
    <location>
        <begin position="161"/>
        <end position="164"/>
    </location>
</feature>
<feature type="helix" evidence="13">
    <location>
        <begin position="168"/>
        <end position="178"/>
    </location>
</feature>
<feature type="helix" evidence="13">
    <location>
        <begin position="180"/>
        <end position="186"/>
    </location>
</feature>
<feature type="helix" evidence="13">
    <location>
        <begin position="188"/>
        <end position="193"/>
    </location>
</feature>
<feature type="turn" evidence="13">
    <location>
        <begin position="195"/>
        <end position="199"/>
    </location>
</feature>
<feature type="helix" evidence="13">
    <location>
        <begin position="207"/>
        <end position="212"/>
    </location>
</feature>
<feature type="helix" evidence="13">
    <location>
        <begin position="218"/>
        <end position="221"/>
    </location>
</feature>
<feature type="helix" evidence="13">
    <location>
        <begin position="228"/>
        <end position="230"/>
    </location>
</feature>
<feature type="turn" evidence="13">
    <location>
        <begin position="231"/>
        <end position="237"/>
    </location>
</feature>
<feature type="helix" evidence="13">
    <location>
        <begin position="242"/>
        <end position="245"/>
    </location>
</feature>
<feature type="helix" evidence="13">
    <location>
        <begin position="260"/>
        <end position="276"/>
    </location>
</feature>
<feature type="helix" evidence="13">
    <location>
        <begin position="279"/>
        <end position="282"/>
    </location>
</feature>
<feature type="helix" evidence="13">
    <location>
        <begin position="286"/>
        <end position="289"/>
    </location>
</feature>
<feature type="strand" evidence="13">
    <location>
        <begin position="293"/>
        <end position="297"/>
    </location>
</feature>
<feature type="turn" evidence="13">
    <location>
        <begin position="300"/>
        <end position="302"/>
    </location>
</feature>
<feature type="helix" evidence="13">
    <location>
        <begin position="303"/>
        <end position="311"/>
    </location>
</feature>
<feature type="strand" evidence="13">
    <location>
        <begin position="316"/>
        <end position="321"/>
    </location>
</feature>
<feature type="helix" evidence="13">
    <location>
        <begin position="323"/>
        <end position="331"/>
    </location>
</feature>
<feature type="helix" evidence="13">
    <location>
        <begin position="334"/>
        <end position="337"/>
    </location>
</feature>
<feature type="helix" evidence="13">
    <location>
        <begin position="339"/>
        <end position="343"/>
    </location>
</feature>
<feature type="strand" evidence="13">
    <location>
        <begin position="346"/>
        <end position="351"/>
    </location>
</feature>
<feature type="strand" evidence="13">
    <location>
        <begin position="364"/>
        <end position="371"/>
    </location>
</feature>
<feature type="helix" evidence="13">
    <location>
        <begin position="372"/>
        <end position="374"/>
    </location>
</feature>
<feature type="helix" evidence="13">
    <location>
        <begin position="377"/>
        <end position="388"/>
    </location>
</feature>
<feature type="strand" evidence="13">
    <location>
        <begin position="396"/>
        <end position="403"/>
    </location>
</feature>
<feature type="helix" evidence="13">
    <location>
        <begin position="425"/>
        <end position="428"/>
    </location>
</feature>
<feature type="helix" evidence="13">
    <location>
        <begin position="429"/>
        <end position="442"/>
    </location>
</feature>
<feature type="helix" evidence="13">
    <location>
        <begin position="449"/>
        <end position="458"/>
    </location>
</feature>
<feature type="strand" evidence="13">
    <location>
        <begin position="461"/>
        <end position="467"/>
    </location>
</feature>
<feature type="strand" evidence="13">
    <location>
        <begin position="470"/>
        <end position="480"/>
    </location>
</feature>
<name>GEDA_ASPTN</name>
<sequence>MERQPKSLSDAVQLLQTTEIISKCTQTIIAEWSNEAETFKKRASSGRAGAELVLPSHELFNAQRTITAAIGKLIELVSEPSVRILEIAGQYQESRALYIAVERRIPDILASQDNEGGMPVKELSSRTGIEYRKLSRILRYLCSMGTFRQVGPDVFANNTISACLVANEPLRAYVRLTGSEAFTASDRLPKTLLDPSTGPSYDVTRTAWQDAIGTTKPRWEWIEERVEPDKLLDSGYHYPGIPSLILEPQPPGEDGLVARPELEIMGLAMVGGGRVFGAAHVFDFPWASLDNALVVDVGGGVGGFALQLSKVYPDLRFVIQDRGPVIQQALESVWPNENPAALKDQRVQFMEHSFFDKNPVEGADVYYLRYVLHDWSDDYCVNILSHIRESMAPHSRLLICEQVMNTTIGDPDLTSAPAPLPANYGFHARFSHSRDLTMMAAINGIERTPEEFKTILKSAGLALKQIWECRSQVSLLEAVRADARTA</sequence>
<organism>
    <name type="scientific">Aspergillus terreus (strain NIH 2624 / FGSC A1156)</name>
    <dbReference type="NCBI Taxonomy" id="341663"/>
    <lineage>
        <taxon>Eukaryota</taxon>
        <taxon>Fungi</taxon>
        <taxon>Dikarya</taxon>
        <taxon>Ascomycota</taxon>
        <taxon>Pezizomycotina</taxon>
        <taxon>Eurotiomycetes</taxon>
        <taxon>Eurotiomycetidae</taxon>
        <taxon>Eurotiales</taxon>
        <taxon>Aspergillaceae</taxon>
        <taxon>Aspergillus</taxon>
        <taxon>Aspergillus subgen. Circumdati</taxon>
    </lineage>
</organism>
<comment type="function">
    <text evidence="4 5 7 8 9 10 11">O-methyltransferase; part of the gene cluster that mediates the biosynthesis of geodin, an intermediate in the biosynthesis of other natural products (PubMed:19549600, PubMed:24009710, PubMed:7665560). The pathway begins with the synthesis of atrochrysone thioester by the polyketide synthase (PKS) gedC (PubMed:12536215, PubMed:19549600). The atrochrysone carboxyl ACP thioesterase gedB then breaks the thioester bond and releases the atrochrysone carboxylic acid from gedC (PubMed:19549600). The atrochrysone carboxylic acid is then converted to atrochrysone which is further transformed into emodinanthrone (PubMed:24009710). The next step is performed by the emodinanthrone oxygenase gedH that catalyzes the oxidation of emodinanthrone to emodin (PubMed:1810248). Emodin O-methyltransferase encoded probably by gedA then catalyzes methylation of the 8-hydroxy group of emodin to form questin (PubMed:1444712). Ring cleavage of questin by questin oxidase gedK leads to desmethylsulochrin via several intermediates including questin epoxide (PubMed:3182756). Another methylation step probably catalyzed by methyltransferase gedG leads to the formation of sulochrin which is further converted to dihydrogeodin by the sulochrin halogenase gedL (PubMed:24009710). Finally, the dihydrogeodin oxidase gedJ catalyzes the stereospecific phenol oxidative coupling reaction converting dihydrogeodin to geodin (PubMed:7665560).</text>
</comment>
<comment type="catalytic activity">
    <reaction evidence="5">
        <text>emodin + S-adenosyl-L-methionine = questin + S-adenosyl-L-homocysteine + H(+)</text>
        <dbReference type="Rhea" id="RHEA:36643"/>
        <dbReference type="ChEBI" id="CHEBI:15378"/>
        <dbReference type="ChEBI" id="CHEBI:57676"/>
        <dbReference type="ChEBI" id="CHEBI:57856"/>
        <dbReference type="ChEBI" id="CHEBI:59789"/>
        <dbReference type="ChEBI" id="CHEBI:77659"/>
        <dbReference type="EC" id="2.1.1.283"/>
    </reaction>
    <physiologicalReaction direction="left-to-right" evidence="5">
        <dbReference type="Rhea" id="RHEA:36644"/>
    </physiologicalReaction>
</comment>
<comment type="biophysicochemical properties">
    <kinetics>
        <KM evidence="5">0.34 uM for emodin</KM>
        <KM evidence="5">4.1 uM for S-adenosyl-l-methionine (SAM)</KM>
    </kinetics>
    <phDependence>
        <text evidence="5">Optimum pH is 7.0-8.0.</text>
    </phDependence>
</comment>
<comment type="pathway">
    <text evidence="9">Secondary metabolite biosynthesis.</text>
</comment>
<comment type="biotechnology">
    <text evidence="3 6">Geodin shows the glucose uptake stimulator activity towards rat adipocytes (PubMed:16320762). Geodin also enhances the fibrinolytic activity of vascular endothelial cells (PubMed:10819297).</text>
</comment>
<comment type="similarity">
    <text>Belongs to the class I-like SAM-binding methyltransferase superfamily. Cation-independent O-methyltransferase family.</text>
</comment>
<proteinExistence type="evidence at protein level"/>
<evidence type="ECO:0000250" key="1">
    <source>
        <dbReference type="UniProtKB" id="O04385"/>
    </source>
</evidence>
<evidence type="ECO:0000255" key="2">
    <source>
        <dbReference type="PROSITE-ProRule" id="PRU01020"/>
    </source>
</evidence>
<evidence type="ECO:0000269" key="3">
    <source>
    </source>
</evidence>
<evidence type="ECO:0000269" key="4">
    <source>
    </source>
</evidence>
<evidence type="ECO:0000269" key="5">
    <source>
    </source>
</evidence>
<evidence type="ECO:0000269" key="6">
    <source>
    </source>
</evidence>
<evidence type="ECO:0000269" key="7">
    <source>
    </source>
</evidence>
<evidence type="ECO:0000269" key="8">
    <source>
    </source>
</evidence>
<evidence type="ECO:0000269" key="9">
    <source>
    </source>
</evidence>
<evidence type="ECO:0000269" key="10">
    <source>
    </source>
</evidence>
<evidence type="ECO:0000269" key="11">
    <source>
    </source>
</evidence>
<evidence type="ECO:0000303" key="12">
    <source>
    </source>
</evidence>
<evidence type="ECO:0007829" key="13">
    <source>
        <dbReference type="PDB" id="7WH9"/>
    </source>
</evidence>
<keyword id="KW-0002">3D-structure</keyword>
<keyword id="KW-0489">Methyltransferase</keyword>
<keyword id="KW-1185">Reference proteome</keyword>
<keyword id="KW-0949">S-adenosyl-L-methionine</keyword>
<keyword id="KW-0808">Transferase</keyword>